<organism>
    <name type="scientific">Burkholderia orbicola (strain AU 1054)</name>
    <dbReference type="NCBI Taxonomy" id="331271"/>
    <lineage>
        <taxon>Bacteria</taxon>
        <taxon>Pseudomonadati</taxon>
        <taxon>Pseudomonadota</taxon>
        <taxon>Betaproteobacteria</taxon>
        <taxon>Burkholderiales</taxon>
        <taxon>Burkholderiaceae</taxon>
        <taxon>Burkholderia</taxon>
        <taxon>Burkholderia cepacia complex</taxon>
        <taxon>Burkholderia orbicola</taxon>
    </lineage>
</organism>
<keyword id="KW-0145">Chemotaxis</keyword>
<keyword id="KW-0963">Cytoplasm</keyword>
<keyword id="KW-0378">Hydrolase</keyword>
<keyword id="KW-0597">Phosphoprotein</keyword>
<proteinExistence type="inferred from homology"/>
<comment type="function">
    <text evidence="1">Involved in chemotaxis. Part of a chemotaxis signal transduction system that modulates chemotaxis in response to various stimuli. Catalyzes the demethylation of specific methylglutamate residues introduced into the chemoreceptors (methyl-accepting chemotaxis proteins or MCP) by CheR. Also mediates the irreversible deamidation of specific glutamine residues to glutamic acid.</text>
</comment>
<comment type="catalytic activity">
    <reaction evidence="1">
        <text>[protein]-L-glutamate 5-O-methyl ester + H2O = L-glutamyl-[protein] + methanol + H(+)</text>
        <dbReference type="Rhea" id="RHEA:23236"/>
        <dbReference type="Rhea" id="RHEA-COMP:10208"/>
        <dbReference type="Rhea" id="RHEA-COMP:10311"/>
        <dbReference type="ChEBI" id="CHEBI:15377"/>
        <dbReference type="ChEBI" id="CHEBI:15378"/>
        <dbReference type="ChEBI" id="CHEBI:17790"/>
        <dbReference type="ChEBI" id="CHEBI:29973"/>
        <dbReference type="ChEBI" id="CHEBI:82795"/>
        <dbReference type="EC" id="3.1.1.61"/>
    </reaction>
</comment>
<comment type="catalytic activity">
    <reaction evidence="1">
        <text>L-glutaminyl-[protein] + H2O = L-glutamyl-[protein] + NH4(+)</text>
        <dbReference type="Rhea" id="RHEA:16441"/>
        <dbReference type="Rhea" id="RHEA-COMP:10207"/>
        <dbReference type="Rhea" id="RHEA-COMP:10208"/>
        <dbReference type="ChEBI" id="CHEBI:15377"/>
        <dbReference type="ChEBI" id="CHEBI:28938"/>
        <dbReference type="ChEBI" id="CHEBI:29973"/>
        <dbReference type="ChEBI" id="CHEBI:30011"/>
        <dbReference type="EC" id="3.5.1.44"/>
    </reaction>
</comment>
<comment type="subcellular location">
    <subcellularLocation>
        <location evidence="1">Cytoplasm</location>
    </subcellularLocation>
</comment>
<comment type="domain">
    <text evidence="1">Contains a C-terminal catalytic domain, and an N-terminal region which modulates catalytic activity.</text>
</comment>
<comment type="PTM">
    <text evidence="1">Phosphorylated by CheA. Phosphorylation of the N-terminal regulatory domain activates the methylesterase activity.</text>
</comment>
<comment type="similarity">
    <text evidence="1">Belongs to the CheB family.</text>
</comment>
<name>CHEB2_BURO1</name>
<dbReference type="EC" id="3.1.1.61" evidence="1"/>
<dbReference type="EC" id="3.5.1.44" evidence="1"/>
<dbReference type="EMBL" id="CP000379">
    <property type="protein sequence ID" value="ABF79196.1"/>
    <property type="molecule type" value="Genomic_DNA"/>
</dbReference>
<dbReference type="SMR" id="Q1BMF9"/>
<dbReference type="HOGENOM" id="CLU_000445_51_0_4"/>
<dbReference type="GO" id="GO:0005737">
    <property type="term" value="C:cytoplasm"/>
    <property type="evidence" value="ECO:0007669"/>
    <property type="project" value="UniProtKB-SubCell"/>
</dbReference>
<dbReference type="GO" id="GO:0000156">
    <property type="term" value="F:phosphorelay response regulator activity"/>
    <property type="evidence" value="ECO:0007669"/>
    <property type="project" value="InterPro"/>
</dbReference>
<dbReference type="GO" id="GO:0008984">
    <property type="term" value="F:protein-glutamate methylesterase activity"/>
    <property type="evidence" value="ECO:0007669"/>
    <property type="project" value="UniProtKB-UniRule"/>
</dbReference>
<dbReference type="GO" id="GO:0050568">
    <property type="term" value="F:protein-glutamine glutaminase activity"/>
    <property type="evidence" value="ECO:0007669"/>
    <property type="project" value="UniProtKB-UniRule"/>
</dbReference>
<dbReference type="GO" id="GO:0006935">
    <property type="term" value="P:chemotaxis"/>
    <property type="evidence" value="ECO:0007669"/>
    <property type="project" value="UniProtKB-UniRule"/>
</dbReference>
<dbReference type="CDD" id="cd16432">
    <property type="entry name" value="CheB_Rec"/>
    <property type="match status" value="1"/>
</dbReference>
<dbReference type="CDD" id="cd17541">
    <property type="entry name" value="REC_CheB-like"/>
    <property type="match status" value="1"/>
</dbReference>
<dbReference type="Gene3D" id="3.40.50.2300">
    <property type="match status" value="1"/>
</dbReference>
<dbReference type="Gene3D" id="3.40.50.180">
    <property type="entry name" value="Methylesterase CheB, C-terminal domain"/>
    <property type="match status" value="1"/>
</dbReference>
<dbReference type="HAMAP" id="MF_00099">
    <property type="entry name" value="CheB_chemtxs"/>
    <property type="match status" value="1"/>
</dbReference>
<dbReference type="InterPro" id="IPR008248">
    <property type="entry name" value="CheB-like"/>
</dbReference>
<dbReference type="InterPro" id="IPR035909">
    <property type="entry name" value="CheB_C"/>
</dbReference>
<dbReference type="InterPro" id="IPR011006">
    <property type="entry name" value="CheY-like_superfamily"/>
</dbReference>
<dbReference type="InterPro" id="IPR000673">
    <property type="entry name" value="Sig_transdc_resp-reg_Me-estase"/>
</dbReference>
<dbReference type="InterPro" id="IPR001789">
    <property type="entry name" value="Sig_transdc_resp-reg_receiver"/>
</dbReference>
<dbReference type="NCBIfam" id="NF009206">
    <property type="entry name" value="PRK12555.1"/>
    <property type="match status" value="1"/>
</dbReference>
<dbReference type="PANTHER" id="PTHR42872">
    <property type="entry name" value="PROTEIN-GLUTAMATE METHYLESTERASE/PROTEIN-GLUTAMINE GLUTAMINASE"/>
    <property type="match status" value="1"/>
</dbReference>
<dbReference type="PANTHER" id="PTHR42872:SF6">
    <property type="entry name" value="PROTEIN-GLUTAMATE METHYLESTERASE_PROTEIN-GLUTAMINE GLUTAMINASE"/>
    <property type="match status" value="1"/>
</dbReference>
<dbReference type="Pfam" id="PF01339">
    <property type="entry name" value="CheB_methylest"/>
    <property type="match status" value="1"/>
</dbReference>
<dbReference type="Pfam" id="PF00072">
    <property type="entry name" value="Response_reg"/>
    <property type="match status" value="1"/>
</dbReference>
<dbReference type="PIRSF" id="PIRSF000876">
    <property type="entry name" value="RR_chemtxs_CheB"/>
    <property type="match status" value="1"/>
</dbReference>
<dbReference type="SMART" id="SM00448">
    <property type="entry name" value="REC"/>
    <property type="match status" value="1"/>
</dbReference>
<dbReference type="SUPFAM" id="SSF52172">
    <property type="entry name" value="CheY-like"/>
    <property type="match status" value="1"/>
</dbReference>
<dbReference type="SUPFAM" id="SSF52738">
    <property type="entry name" value="Methylesterase CheB, C-terminal domain"/>
    <property type="match status" value="1"/>
</dbReference>
<dbReference type="PROSITE" id="PS50122">
    <property type="entry name" value="CHEB"/>
    <property type="match status" value="1"/>
</dbReference>
<dbReference type="PROSITE" id="PS50110">
    <property type="entry name" value="RESPONSE_REGULATORY"/>
    <property type="match status" value="1"/>
</dbReference>
<accession>Q1BMF9</accession>
<evidence type="ECO:0000255" key="1">
    <source>
        <dbReference type="HAMAP-Rule" id="MF_00099"/>
    </source>
</evidence>
<reference key="1">
    <citation type="submission" date="2006-05" db="EMBL/GenBank/DDBJ databases">
        <title>Complete sequence of chromosome 2 of Burkholderia cenocepacia AU 1054.</title>
        <authorList>
            <consortium name="US DOE Joint Genome Institute"/>
            <person name="Copeland A."/>
            <person name="Lucas S."/>
            <person name="Lapidus A."/>
            <person name="Barry K."/>
            <person name="Detter J.C."/>
            <person name="Glavina del Rio T."/>
            <person name="Hammon N."/>
            <person name="Israni S."/>
            <person name="Dalin E."/>
            <person name="Tice H."/>
            <person name="Pitluck S."/>
            <person name="Chain P."/>
            <person name="Malfatti S."/>
            <person name="Shin M."/>
            <person name="Vergez L."/>
            <person name="Schmutz J."/>
            <person name="Larimer F."/>
            <person name="Land M."/>
            <person name="Hauser L."/>
            <person name="Kyrpides N."/>
            <person name="Lykidis A."/>
            <person name="LiPuma J.J."/>
            <person name="Konstantinidis K."/>
            <person name="Tiedje J.M."/>
            <person name="Richardson P."/>
        </authorList>
    </citation>
    <scope>NUCLEOTIDE SEQUENCE [LARGE SCALE GENOMIC DNA]</scope>
    <source>
        <strain>AU 1054</strain>
    </source>
</reference>
<feature type="chain" id="PRO_0000264265" description="Protein-glutamate methylesterase/protein-glutamine glutaminase 2">
    <location>
        <begin position="1"/>
        <end position="334"/>
    </location>
</feature>
<feature type="domain" description="Response regulatory" evidence="1">
    <location>
        <begin position="2"/>
        <end position="120"/>
    </location>
</feature>
<feature type="domain" description="CheB-type methylesterase" evidence="1">
    <location>
        <begin position="134"/>
        <end position="334"/>
    </location>
</feature>
<feature type="active site" evidence="1">
    <location>
        <position position="157"/>
    </location>
</feature>
<feature type="active site" evidence="1">
    <location>
        <position position="184"/>
    </location>
</feature>
<feature type="active site" evidence="1">
    <location>
        <position position="277"/>
    </location>
</feature>
<feature type="modified residue" description="4-aspartylphosphate" evidence="1">
    <location>
        <position position="53"/>
    </location>
</feature>
<protein>
    <recommendedName>
        <fullName evidence="1">Protein-glutamate methylesterase/protein-glutamine glutaminase 2</fullName>
        <ecNumber evidence="1">3.1.1.61</ecNumber>
        <ecNumber evidence="1">3.5.1.44</ecNumber>
    </recommendedName>
</protein>
<sequence>MNIGIVNDLPLAVEAMRRAIARRPEHRVLWVATDGPQAVELCAAQPPDIVLMDLIMPKFDGIEATRRIMRPERPCAILIVTSCIGANAWRVFEAMGAGALDAVDTPRLGDGAAGDTTKLLLAKIDQIGRLLDAPGSSRLAGAAARGGAGPLIAIGASAGGPGALASILGNLPADFNAPIVIVQHVDRAFAEGMAQWLDGQTRLAVRVAREGDRPQPGVALLAATDDHLRITRAGTLEYTREPAATPYRPSVDVFFNSLTEHWPGRVIGVLLTGMGRDGAIGLKALRMKGYHTIAQDEATSAVYGMPKAAATLGAARAILPLGRIAGELAALARI</sequence>
<gene>
    <name evidence="1" type="primary">cheB2</name>
    <name type="ordered locus">Bcen_4310</name>
</gene>